<protein>
    <recommendedName>
        <fullName evidence="1">Large ribosomal subunit protein uL11</fullName>
    </recommendedName>
    <alternativeName>
        <fullName evidence="2">50S ribosomal protein L11</fullName>
    </alternativeName>
</protein>
<reference key="1">
    <citation type="journal article" date="2006" name="Genome Res.">
        <title>Skewed genomic variability in strains of the toxigenic bacterial pathogen, Clostridium perfringens.</title>
        <authorList>
            <person name="Myers G.S.A."/>
            <person name="Rasko D.A."/>
            <person name="Cheung J.K."/>
            <person name="Ravel J."/>
            <person name="Seshadri R."/>
            <person name="DeBoy R.T."/>
            <person name="Ren Q."/>
            <person name="Varga J."/>
            <person name="Awad M.M."/>
            <person name="Brinkac L.M."/>
            <person name="Daugherty S.C."/>
            <person name="Haft D.H."/>
            <person name="Dodson R.J."/>
            <person name="Madupu R."/>
            <person name="Nelson W.C."/>
            <person name="Rosovitz M.J."/>
            <person name="Sullivan S.A."/>
            <person name="Khouri H."/>
            <person name="Dimitrov G.I."/>
            <person name="Watkins K.L."/>
            <person name="Mulligan S."/>
            <person name="Benton J."/>
            <person name="Radune D."/>
            <person name="Fisher D.J."/>
            <person name="Atkins H.S."/>
            <person name="Hiscox T."/>
            <person name="Jost B.H."/>
            <person name="Billington S.J."/>
            <person name="Songer J.G."/>
            <person name="McClane B.A."/>
            <person name="Titball R.W."/>
            <person name="Rood J.I."/>
            <person name="Melville S.B."/>
            <person name="Paulsen I.T."/>
        </authorList>
    </citation>
    <scope>NUCLEOTIDE SEQUENCE [LARGE SCALE GENOMIC DNA]</scope>
    <source>
        <strain>SM101 / Type A</strain>
    </source>
</reference>
<organism>
    <name type="scientific">Clostridium perfringens (strain SM101 / Type A)</name>
    <dbReference type="NCBI Taxonomy" id="289380"/>
    <lineage>
        <taxon>Bacteria</taxon>
        <taxon>Bacillati</taxon>
        <taxon>Bacillota</taxon>
        <taxon>Clostridia</taxon>
        <taxon>Eubacteriales</taxon>
        <taxon>Clostridiaceae</taxon>
        <taxon>Clostridium</taxon>
    </lineage>
</organism>
<accession>Q0SQD2</accession>
<feature type="chain" id="PRO_0000258142" description="Large ribosomal subunit protein uL11">
    <location>
        <begin position="1"/>
        <end position="141"/>
    </location>
</feature>
<keyword id="KW-0488">Methylation</keyword>
<keyword id="KW-0687">Ribonucleoprotein</keyword>
<keyword id="KW-0689">Ribosomal protein</keyword>
<keyword id="KW-0694">RNA-binding</keyword>
<keyword id="KW-0699">rRNA-binding</keyword>
<comment type="function">
    <text evidence="1">Forms part of the ribosomal stalk which helps the ribosome interact with GTP-bound translation factors.</text>
</comment>
<comment type="subunit">
    <text evidence="1">Part of the ribosomal stalk of the 50S ribosomal subunit. Interacts with L10 and the large rRNA to form the base of the stalk. L10 forms an elongated spine to which L12 dimers bind in a sequential fashion forming a multimeric L10(L12)X complex.</text>
</comment>
<comment type="PTM">
    <text evidence="1">One or more lysine residues are methylated.</text>
</comment>
<comment type="similarity">
    <text evidence="1">Belongs to the universal ribosomal protein uL11 family.</text>
</comment>
<dbReference type="EMBL" id="CP000312">
    <property type="protein sequence ID" value="ABG87695.1"/>
    <property type="molecule type" value="Genomic_DNA"/>
</dbReference>
<dbReference type="RefSeq" id="WP_003452181.1">
    <property type="nucleotide sequence ID" value="NZ_CAXVKH010000004.1"/>
</dbReference>
<dbReference type="SMR" id="Q0SQD2"/>
<dbReference type="GeneID" id="93000997"/>
<dbReference type="KEGG" id="cpr:CPR_2412"/>
<dbReference type="Proteomes" id="UP000001824">
    <property type="component" value="Chromosome"/>
</dbReference>
<dbReference type="GO" id="GO:0022625">
    <property type="term" value="C:cytosolic large ribosomal subunit"/>
    <property type="evidence" value="ECO:0007669"/>
    <property type="project" value="TreeGrafter"/>
</dbReference>
<dbReference type="GO" id="GO:0070180">
    <property type="term" value="F:large ribosomal subunit rRNA binding"/>
    <property type="evidence" value="ECO:0007669"/>
    <property type="project" value="UniProtKB-UniRule"/>
</dbReference>
<dbReference type="GO" id="GO:0003735">
    <property type="term" value="F:structural constituent of ribosome"/>
    <property type="evidence" value="ECO:0007669"/>
    <property type="project" value="InterPro"/>
</dbReference>
<dbReference type="GO" id="GO:0006412">
    <property type="term" value="P:translation"/>
    <property type="evidence" value="ECO:0007669"/>
    <property type="project" value="UniProtKB-UniRule"/>
</dbReference>
<dbReference type="CDD" id="cd00349">
    <property type="entry name" value="Ribosomal_L11"/>
    <property type="match status" value="1"/>
</dbReference>
<dbReference type="FunFam" id="1.10.10.250:FF:000001">
    <property type="entry name" value="50S ribosomal protein L11"/>
    <property type="match status" value="1"/>
</dbReference>
<dbReference type="FunFam" id="3.30.1550.10:FF:000001">
    <property type="entry name" value="50S ribosomal protein L11"/>
    <property type="match status" value="1"/>
</dbReference>
<dbReference type="Gene3D" id="1.10.10.250">
    <property type="entry name" value="Ribosomal protein L11, C-terminal domain"/>
    <property type="match status" value="1"/>
</dbReference>
<dbReference type="Gene3D" id="3.30.1550.10">
    <property type="entry name" value="Ribosomal protein L11/L12, N-terminal domain"/>
    <property type="match status" value="1"/>
</dbReference>
<dbReference type="HAMAP" id="MF_00736">
    <property type="entry name" value="Ribosomal_uL11"/>
    <property type="match status" value="1"/>
</dbReference>
<dbReference type="InterPro" id="IPR000911">
    <property type="entry name" value="Ribosomal_uL11"/>
</dbReference>
<dbReference type="InterPro" id="IPR006519">
    <property type="entry name" value="Ribosomal_uL11_bac-typ"/>
</dbReference>
<dbReference type="InterPro" id="IPR020783">
    <property type="entry name" value="Ribosomal_uL11_C"/>
</dbReference>
<dbReference type="InterPro" id="IPR036769">
    <property type="entry name" value="Ribosomal_uL11_C_sf"/>
</dbReference>
<dbReference type="InterPro" id="IPR020784">
    <property type="entry name" value="Ribosomal_uL11_N"/>
</dbReference>
<dbReference type="InterPro" id="IPR036796">
    <property type="entry name" value="Ribosomal_uL11_N_sf"/>
</dbReference>
<dbReference type="NCBIfam" id="TIGR01632">
    <property type="entry name" value="L11_bact"/>
    <property type="match status" value="1"/>
</dbReference>
<dbReference type="PANTHER" id="PTHR11661">
    <property type="entry name" value="60S RIBOSOMAL PROTEIN L12"/>
    <property type="match status" value="1"/>
</dbReference>
<dbReference type="PANTHER" id="PTHR11661:SF1">
    <property type="entry name" value="LARGE RIBOSOMAL SUBUNIT PROTEIN UL11M"/>
    <property type="match status" value="1"/>
</dbReference>
<dbReference type="Pfam" id="PF00298">
    <property type="entry name" value="Ribosomal_L11"/>
    <property type="match status" value="1"/>
</dbReference>
<dbReference type="Pfam" id="PF03946">
    <property type="entry name" value="Ribosomal_L11_N"/>
    <property type="match status" value="1"/>
</dbReference>
<dbReference type="SMART" id="SM00649">
    <property type="entry name" value="RL11"/>
    <property type="match status" value="1"/>
</dbReference>
<dbReference type="SUPFAM" id="SSF54747">
    <property type="entry name" value="Ribosomal L11/L12e N-terminal domain"/>
    <property type="match status" value="1"/>
</dbReference>
<dbReference type="SUPFAM" id="SSF46906">
    <property type="entry name" value="Ribosomal protein L11, C-terminal domain"/>
    <property type="match status" value="1"/>
</dbReference>
<evidence type="ECO:0000255" key="1">
    <source>
        <dbReference type="HAMAP-Rule" id="MF_00736"/>
    </source>
</evidence>
<evidence type="ECO:0000305" key="2"/>
<gene>
    <name evidence="1" type="primary">rplK</name>
    <name type="ordered locus">CPR_2412</name>
</gene>
<proteinExistence type="inferred from homology"/>
<name>RL11_CLOPS</name>
<sequence length="141" mass="14900">MAKKVTGMIKLQLPAGKATPAPPVGPALGQHGVNIMGFCKEFNAKTADKAGLIIPVVITVYQDRSFSFILKTPPAAVLIKKELGLESGSGVPNRTKVGNITKEQIRKIAELKMPDLNAATIETAMSMIEGTARSMGVVVVE</sequence>